<name>ARGD_SYNY3</name>
<comment type="function">
    <text evidence="2 3">Catalyzes the reversible conversion of N-acetylornithine to N-acetylglutamate-5-semialdehyde (PubMed:36982927). In vitro, also shows very low ornithine aminotransferase (OAT) and gamma-aminobutyrate aminotransferase (GABA-AT) activity, catalyzing the conversion of ornithine (Orn) to glutamate-5-semialdehyde and of gamma-aminobutyric acid (GABA) to succinate semialdehyde (PubMed:36982927). It has been shown to function as a GABA-AT and contributes to closing the tricarboxylic acid cycle of Synechocystis sp. PCC6803 via the GABA shunt (PubMed:24989231). However, the catalytic efficiency toward N-acetylornithine is 2500-fold and 10700-fold higher than that toward ornithine and gamma-aminobutyrate, respectively, indicating that the protein mainly functions as an N-acetylornithine aminotransferase (PubMed:36982927).</text>
</comment>
<comment type="catalytic activity">
    <reaction evidence="1 3">
        <text>N(2)-acetyl-L-ornithine + 2-oxoglutarate = N-acetyl-L-glutamate 5-semialdehyde + L-glutamate</text>
        <dbReference type="Rhea" id="RHEA:18049"/>
        <dbReference type="ChEBI" id="CHEBI:16810"/>
        <dbReference type="ChEBI" id="CHEBI:29123"/>
        <dbReference type="ChEBI" id="CHEBI:29985"/>
        <dbReference type="ChEBI" id="CHEBI:57805"/>
        <dbReference type="EC" id="2.6.1.11"/>
    </reaction>
</comment>
<comment type="cofactor">
    <cofactor evidence="1 3">
        <name>pyridoxal 5'-phosphate</name>
        <dbReference type="ChEBI" id="CHEBI:597326"/>
    </cofactor>
    <text evidence="1">Binds 1 pyridoxal phosphate per subunit.</text>
</comment>
<comment type="activity regulation">
    <text evidence="3">N-acetylornithine aminotransferase activity is stimulated by the addition of Mg(2+), Ca(2+) or Mn(2+), and inhibited by the addition of Zn(2+), Cu(2+), Co(2+) or Ni(2+).</text>
</comment>
<comment type="biophysicochemical properties">
    <kinetics>
        <KM evidence="3">0.12 mM for N-acetylornithine</KM>
        <KM evidence="3">20.9 mM for ornithine</KM>
        <KM evidence="3">78.1 mM for gamma-aminobutyric acid</KM>
        <KM evidence="3">0.039 mM for 2-oxoglutarate (in the presence of N-acetylornithine)</KM>
        <KM evidence="3">0.13 mM for 2-oxoglutarate (in the presence of ornithine)</KM>
        <KM evidence="3">0.04 mM for 2-oxoglutarate (in the presence of gamma-aminobutyric acid)</KM>
        <text evidence="3">kcat is 2.31 sec(-1) with N-acetylornithine as substrate. kcat is 0.16 sec(-1) with ornithine as substrate. kcat is 0.14 sec(-1) with gamma-aminobutyric acid as substrate. kcat is 2.50 sec(-1) with 2-oxoglutarate as substrate (in the presence of N-acetylornithine). kcat is 0.11 sec(-1) with 2-oxoglutarate as substrate (in the presence of ornithine). kcat is 0.056 sec(-1) with 2-oxoglutarate as substrate (in the presence of gamma-aminobutyric acid).</text>
    </kinetics>
    <temperatureDependence>
        <text evidence="3">Optimum temperature is 30 degrees Celsius.</text>
    </temperatureDependence>
</comment>
<comment type="pathway">
    <text evidence="1">Amino-acid biosynthesis; L-arginine biosynthesis; N(2)-acetyl-L-ornithine from L-glutamate: step 4/4.</text>
</comment>
<comment type="subunit">
    <text evidence="1 3">Homodimer.</text>
</comment>
<comment type="subcellular location">
    <subcellularLocation>
        <location evidence="1">Cytoplasm</location>
    </subcellularLocation>
</comment>
<comment type="disruption phenotype">
    <text evidence="2">Mutant lacking this gene cannot grow in BG11 medium without the addition of citrulline or arginine (PubMed:24989231). The level of succinate in the mutant is reduced to 30-35% of that in the wild-type strain (PubMed:24989231).</text>
</comment>
<comment type="miscellaneous">
    <text evidence="1">May also have succinyldiaminopimelate aminotransferase activity, thus carrying out the corresponding step in lysine biosynthesis.</text>
</comment>
<comment type="similarity">
    <text evidence="1">Belongs to the class-III pyridoxal-phosphate-dependent aminotransferase family. ArgD subfamily.</text>
</comment>
<reference key="1">
    <citation type="journal article" date="1996" name="DNA Res.">
        <title>Sequence analysis of the genome of the unicellular cyanobacterium Synechocystis sp. strain PCC6803. II. Sequence determination of the entire genome and assignment of potential protein-coding regions.</title>
        <authorList>
            <person name="Kaneko T."/>
            <person name="Sato S."/>
            <person name="Kotani H."/>
            <person name="Tanaka A."/>
            <person name="Asamizu E."/>
            <person name="Nakamura Y."/>
            <person name="Miyajima N."/>
            <person name="Hirosawa M."/>
            <person name="Sugiura M."/>
            <person name="Sasamoto S."/>
            <person name="Kimura T."/>
            <person name="Hosouchi T."/>
            <person name="Matsuno A."/>
            <person name="Muraki A."/>
            <person name="Nakazaki N."/>
            <person name="Naruo K."/>
            <person name="Okumura S."/>
            <person name="Shimpo S."/>
            <person name="Takeuchi C."/>
            <person name="Wada T."/>
            <person name="Watanabe A."/>
            <person name="Yamada M."/>
            <person name="Yasuda M."/>
            <person name="Tabata S."/>
        </authorList>
    </citation>
    <scope>NUCLEOTIDE SEQUENCE [LARGE SCALE GENOMIC DNA]</scope>
    <source>
        <strain>ATCC 27184 / PCC 6803 / Kazusa</strain>
    </source>
</reference>
<reference key="2">
    <citation type="journal article" date="2014" name="Mol. Microbiol.">
        <title>The gamma-aminobutyric acid shunt contributes to closing the tricarboxylic acid cycle in Synechocystis sp. PCC 6803.</title>
        <authorList>
            <person name="Xiong W."/>
            <person name="Brune D."/>
            <person name="Vermaas W.F."/>
        </authorList>
    </citation>
    <scope>FUNCTION IN GABA SHUNT</scope>
    <scope>DISRUPTION PHENOTYPE</scope>
    <source>
        <strain>ATCC 27184 / PCC 6803 / Kazusa</strain>
    </source>
</reference>
<reference key="3">
    <citation type="journal article" date="2023" name="Int. J. Mol. Sci.">
        <title>Kinetic Characterization and Catalytic Mechanism of N-Acetylornithine Aminotransferase Encoded by slr1022 Gene from Synechocystis sp. PCC6803.</title>
        <authorList>
            <person name="Li Z.M."/>
            <person name="Bai F."/>
            <person name="Wang X."/>
            <person name="Xie C."/>
            <person name="Wan Y."/>
            <person name="Li Y."/>
            <person name="Liu J."/>
            <person name="Li Z."/>
        </authorList>
    </citation>
    <scope>FUNCTION</scope>
    <scope>CATALYTIC ACTIVITY</scope>
    <scope>PROPOSED REACTION MECHANISM</scope>
    <scope>COFACTOR</scope>
    <scope>ACTIVITY REGULATION</scope>
    <scope>BIOPHYSICOCHEMICAL PROPERTIES</scope>
    <scope>SUBUNIT</scope>
    <scope>MUTAGENESIS OF TYR-39; SER-125; GLY-126; ALA-127; ARG-163; GLU-223; ASP-251; GLN-254; LYS-280; THR-308 AND ARG-402</scope>
    <source>
        <strain>ATCC 27184 / PCC 6803 / Kazusa</strain>
    </source>
</reference>
<gene>
    <name evidence="1 5" type="primary">argD</name>
    <name evidence="6" type="ordered locus">slr1022</name>
</gene>
<protein>
    <recommendedName>
        <fullName evidence="1 4">Acetylornithine aminotransferase</fullName>
        <shortName evidence="1 4">ACOAT</shortName>
        <ecNumber evidence="1 3">2.6.1.11</ecNumber>
    </recommendedName>
</protein>
<organism>
    <name type="scientific">Synechocystis sp. (strain ATCC 27184 / PCC 6803 / Kazusa)</name>
    <dbReference type="NCBI Taxonomy" id="1111708"/>
    <lineage>
        <taxon>Bacteria</taxon>
        <taxon>Bacillati</taxon>
        <taxon>Cyanobacteriota</taxon>
        <taxon>Cyanophyceae</taxon>
        <taxon>Synechococcales</taxon>
        <taxon>Merismopediaceae</taxon>
        <taxon>Synechocystis</taxon>
    </lineage>
</organism>
<proteinExistence type="evidence at protein level"/>
<feature type="chain" id="PRO_0000112804" description="Acetylornithine aminotransferase">
    <location>
        <begin position="1"/>
        <end position="429"/>
    </location>
</feature>
<feature type="binding site" evidence="1">
    <location>
        <begin position="126"/>
        <end position="127"/>
    </location>
    <ligand>
        <name>pyridoxal 5'-phosphate</name>
        <dbReference type="ChEBI" id="CHEBI:597326"/>
    </ligand>
</feature>
<feature type="binding site" evidence="1">
    <location>
        <position position="160"/>
    </location>
    <ligand>
        <name>pyridoxal 5'-phosphate</name>
        <dbReference type="ChEBI" id="CHEBI:597326"/>
    </ligand>
</feature>
<feature type="binding site" evidence="1">
    <location>
        <position position="163"/>
    </location>
    <ligand>
        <name>N(2)-acetyl-L-ornithine</name>
        <dbReference type="ChEBI" id="CHEBI:57805"/>
    </ligand>
</feature>
<feature type="binding site" evidence="1">
    <location>
        <begin position="251"/>
        <end position="254"/>
    </location>
    <ligand>
        <name>pyridoxal 5'-phosphate</name>
        <dbReference type="ChEBI" id="CHEBI:597326"/>
    </ligand>
</feature>
<feature type="binding site" evidence="1">
    <location>
        <position position="307"/>
    </location>
    <ligand>
        <name>N(2)-acetyl-L-ornithine</name>
        <dbReference type="ChEBI" id="CHEBI:57805"/>
    </ligand>
</feature>
<feature type="binding site" evidence="1">
    <location>
        <position position="308"/>
    </location>
    <ligand>
        <name>pyridoxal 5'-phosphate</name>
        <dbReference type="ChEBI" id="CHEBI:597326"/>
    </ligand>
</feature>
<feature type="modified residue" description="N6-(pyridoxal phosphate)lysine" evidence="1">
    <location>
        <position position="280"/>
    </location>
</feature>
<feature type="mutagenesis site" description="Retains 7.4% of N-acetylornithine aminotransferase wild-type activity." evidence="3">
    <original>Y</original>
    <variation>F</variation>
    <location>
        <position position="39"/>
    </location>
</feature>
<feature type="mutagenesis site" description="Retains 14% of N-acetylornithine aminotransferase wild-type activity." evidence="3">
    <original>S</original>
    <variation>A</variation>
    <location>
        <position position="125"/>
    </location>
</feature>
<feature type="mutagenesis site" description="Loss of N-acetylornithine aminotransferase activity." evidence="3">
    <original>G</original>
    <variation>A</variation>
    <location>
        <position position="126"/>
    </location>
</feature>
<feature type="mutagenesis site" description="Retains 9.1% of N-acetylornithine aminotransferase wild-type activity." evidence="3">
    <original>A</original>
    <variation>S</variation>
    <location>
        <position position="127"/>
    </location>
</feature>
<feature type="mutagenesis site" description="4100-fold increase in KM for acetylornithine, but does not affect KM for 2-oxoglutarate. Retains 9.5% of N-acetylornithine aminotransferase wild-type activity." evidence="3">
    <original>R</original>
    <variation>A</variation>
    <location>
        <position position="163"/>
    </location>
</feature>
<feature type="mutagenesis site" description="65-fold increase in KM for acetylornithine, but does not affect KM for 2-oxoglutarate. Retains 50% of N-acetylornithine aminotransferase wild-type activity." evidence="3">
    <original>E</original>
    <variation>A</variation>
    <location>
        <position position="223"/>
    </location>
</feature>
<feature type="mutagenesis site" description="73-fold increase in KM for acetylornithine, but does not affect KM for 2-oxoglutarate. Shows 160% of N-acetylornithine aminotransferase wild-type activity." evidence="3">
    <original>E</original>
    <variation>S</variation>
    <location>
        <position position="223"/>
    </location>
</feature>
<feature type="mutagenesis site" description="Loss of N-acetylornithine aminotransferase activity." evidence="3">
    <original>D</original>
    <variation>A</variation>
    <location>
        <position position="251"/>
    </location>
</feature>
<feature type="mutagenesis site" description="Retains 20% of N-acetylornithine aminotransferase wild-type activity." evidence="3">
    <original>D</original>
    <variation>E</variation>
    <location>
        <position position="251"/>
    </location>
</feature>
<feature type="mutagenesis site" description="Retains 0.9% of N-acetylornithine aminotransferase wild-type activity." evidence="3">
    <original>Q</original>
    <variation>A</variation>
    <location>
        <position position="254"/>
    </location>
</feature>
<feature type="mutagenesis site" description="Loss of N-acetylornithine aminotransferase activity." evidence="3">
    <original>K</original>
    <variation>A</variation>
    <location>
        <position position="280"/>
    </location>
</feature>
<feature type="mutagenesis site" description="Retains 0.3% of N-acetylornithine aminotransferase wild-type activity." evidence="3">
    <original>T</original>
    <variation>A</variation>
    <location>
        <position position="308"/>
    </location>
</feature>
<feature type="mutagenesis site" description="2080-fold increase in KM for acetylornithine, but does not affect KM for 2-oxoglutarate. Retains 18% of N-acetylornithine aminotransferase wild-type activity." evidence="3">
    <original>R</original>
    <variation>A</variation>
    <location>
        <position position="402"/>
    </location>
</feature>
<keyword id="KW-0028">Amino-acid biosynthesis</keyword>
<keyword id="KW-0032">Aminotransferase</keyword>
<keyword id="KW-0055">Arginine biosynthesis</keyword>
<keyword id="KW-0963">Cytoplasm</keyword>
<keyword id="KW-0663">Pyridoxal phosphate</keyword>
<keyword id="KW-1185">Reference proteome</keyword>
<keyword id="KW-0808">Transferase</keyword>
<sequence>MTYSPVVESVEAQAFAVTDLSPAAEFKTADFDTYVMNTYGRFPIAIARGQGSTLWDTEGKSYLDFVAGIATCTLGHAHPALVRAVSDQIQKLHHVSNLYYIPEQGELAKWIVEHSCADRVFFCNSGAEANEAAIKLVRKYAHTVLDFLEQPVILTAKASFHGRTLATITATGQPKYQQYFDPLVPGFDYVPYNDIRSLENKVADLDEGNSRVAAIFLEPLQGEGGVRPGDLAYFKRVREICDQNDILLVFDEVQVGVGRTGKLWGYEHLGVEPDIFTSAKGLAGGVPIGAMMCKKFCDVFEPGNHASTFGGNPLACAAGLAVLKTIEGDRLLDNVQARGEQLRSGLAEIKNQYPTLFTEVRGWGLINGLEISAESSLTSVEIVKAAMEQGLLLAPAGPKVLRFVPPLVVTEAEIAQAVEILRQAIATLV</sequence>
<accession>P73133</accession>
<dbReference type="EC" id="2.6.1.11" evidence="1 3"/>
<dbReference type="EMBL" id="BA000022">
    <property type="protein sequence ID" value="BAA17159.1"/>
    <property type="molecule type" value="Genomic_DNA"/>
</dbReference>
<dbReference type="PIR" id="S75245">
    <property type="entry name" value="S75245"/>
</dbReference>
<dbReference type="SMR" id="P73133"/>
<dbReference type="FunCoup" id="P73133">
    <property type="interactions" value="472"/>
</dbReference>
<dbReference type="IntAct" id="P73133">
    <property type="interactions" value="2"/>
</dbReference>
<dbReference type="STRING" id="1148.gene:10498021"/>
<dbReference type="PaxDb" id="1148-1652236"/>
<dbReference type="EnsemblBacteria" id="BAA17159">
    <property type="protein sequence ID" value="BAA17159"/>
    <property type="gene ID" value="BAA17159"/>
</dbReference>
<dbReference type="KEGG" id="syn:slr1022"/>
<dbReference type="eggNOG" id="COG4992">
    <property type="taxonomic scope" value="Bacteria"/>
</dbReference>
<dbReference type="InParanoid" id="P73133"/>
<dbReference type="PhylomeDB" id="P73133"/>
<dbReference type="BioCyc" id="MetaCyc:SGL_RS04875-MONOMER"/>
<dbReference type="BRENDA" id="2.6.1.11">
    <property type="organism ID" value="17663"/>
</dbReference>
<dbReference type="BRENDA" id="2.6.1.19">
    <property type="organism ID" value="17663"/>
</dbReference>
<dbReference type="UniPathway" id="UPA00068">
    <property type="reaction ID" value="UER00109"/>
</dbReference>
<dbReference type="Proteomes" id="UP000001425">
    <property type="component" value="Chromosome"/>
</dbReference>
<dbReference type="GO" id="GO:0005737">
    <property type="term" value="C:cytoplasm"/>
    <property type="evidence" value="ECO:0007669"/>
    <property type="project" value="UniProtKB-SubCell"/>
</dbReference>
<dbReference type="GO" id="GO:0042802">
    <property type="term" value="F:identical protein binding"/>
    <property type="evidence" value="ECO:0000318"/>
    <property type="project" value="GO_Central"/>
</dbReference>
<dbReference type="GO" id="GO:0003992">
    <property type="term" value="F:N2-acetyl-L-ornithine:2-oxoglutarate 5-aminotransferase activity"/>
    <property type="evidence" value="ECO:0007669"/>
    <property type="project" value="UniProtKB-UniRule"/>
</dbReference>
<dbReference type="GO" id="GO:0030170">
    <property type="term" value="F:pyridoxal phosphate binding"/>
    <property type="evidence" value="ECO:0000318"/>
    <property type="project" value="GO_Central"/>
</dbReference>
<dbReference type="GO" id="GO:0006526">
    <property type="term" value="P:L-arginine biosynthetic process"/>
    <property type="evidence" value="ECO:0007669"/>
    <property type="project" value="UniProtKB-UniRule"/>
</dbReference>
<dbReference type="CDD" id="cd00610">
    <property type="entry name" value="OAT_like"/>
    <property type="match status" value="1"/>
</dbReference>
<dbReference type="FunFam" id="3.40.640.10:FF:000004">
    <property type="entry name" value="Acetylornithine aminotransferase"/>
    <property type="match status" value="1"/>
</dbReference>
<dbReference type="Gene3D" id="3.90.1150.10">
    <property type="entry name" value="Aspartate Aminotransferase, domain 1"/>
    <property type="match status" value="1"/>
</dbReference>
<dbReference type="Gene3D" id="3.40.640.10">
    <property type="entry name" value="Type I PLP-dependent aspartate aminotransferase-like (Major domain)"/>
    <property type="match status" value="1"/>
</dbReference>
<dbReference type="HAMAP" id="MF_01107">
    <property type="entry name" value="ArgD_aminotrans_3"/>
    <property type="match status" value="1"/>
</dbReference>
<dbReference type="InterPro" id="IPR004636">
    <property type="entry name" value="AcOrn/SuccOrn_fam"/>
</dbReference>
<dbReference type="InterPro" id="IPR005814">
    <property type="entry name" value="Aminotrans_3"/>
</dbReference>
<dbReference type="InterPro" id="IPR049704">
    <property type="entry name" value="Aminotrans_3_PPA_site"/>
</dbReference>
<dbReference type="InterPro" id="IPR050103">
    <property type="entry name" value="Class-III_PLP-dep_AT"/>
</dbReference>
<dbReference type="InterPro" id="IPR015424">
    <property type="entry name" value="PyrdxlP-dep_Trfase"/>
</dbReference>
<dbReference type="InterPro" id="IPR015421">
    <property type="entry name" value="PyrdxlP-dep_Trfase_major"/>
</dbReference>
<dbReference type="InterPro" id="IPR015422">
    <property type="entry name" value="PyrdxlP-dep_Trfase_small"/>
</dbReference>
<dbReference type="NCBIfam" id="TIGR00707">
    <property type="entry name" value="argD"/>
    <property type="match status" value="1"/>
</dbReference>
<dbReference type="NCBIfam" id="NF002325">
    <property type="entry name" value="PRK01278.1"/>
    <property type="match status" value="1"/>
</dbReference>
<dbReference type="PANTHER" id="PTHR11986:SF79">
    <property type="entry name" value="ACETYLORNITHINE AMINOTRANSFERASE, MITOCHONDRIAL"/>
    <property type="match status" value="1"/>
</dbReference>
<dbReference type="PANTHER" id="PTHR11986">
    <property type="entry name" value="AMINOTRANSFERASE CLASS III"/>
    <property type="match status" value="1"/>
</dbReference>
<dbReference type="Pfam" id="PF00202">
    <property type="entry name" value="Aminotran_3"/>
    <property type="match status" value="1"/>
</dbReference>
<dbReference type="PIRSF" id="PIRSF000521">
    <property type="entry name" value="Transaminase_4ab_Lys_Orn"/>
    <property type="match status" value="1"/>
</dbReference>
<dbReference type="SUPFAM" id="SSF53383">
    <property type="entry name" value="PLP-dependent transferases"/>
    <property type="match status" value="1"/>
</dbReference>
<dbReference type="PROSITE" id="PS00600">
    <property type="entry name" value="AA_TRANSFER_CLASS_3"/>
    <property type="match status" value="1"/>
</dbReference>
<evidence type="ECO:0000255" key="1">
    <source>
        <dbReference type="HAMAP-Rule" id="MF_01107"/>
    </source>
</evidence>
<evidence type="ECO:0000269" key="2">
    <source>
    </source>
</evidence>
<evidence type="ECO:0000269" key="3">
    <source>
    </source>
</evidence>
<evidence type="ECO:0000303" key="4">
    <source>
    </source>
</evidence>
<evidence type="ECO:0000303" key="5">
    <source>
    </source>
</evidence>
<evidence type="ECO:0000312" key="6">
    <source>
        <dbReference type="EMBL" id="BAA17159.1"/>
    </source>
</evidence>